<keyword id="KW-0217">Developmental protein</keyword>
<keyword id="KW-0238">DNA-binding</keyword>
<keyword id="KW-0371">Homeobox</keyword>
<keyword id="KW-0539">Nucleus</keyword>
<keyword id="KW-1185">Reference proteome</keyword>
<evidence type="ECO:0000255" key="1">
    <source>
        <dbReference type="PROSITE-ProRule" id="PRU00108"/>
    </source>
</evidence>
<evidence type="ECO:0000256" key="2">
    <source>
        <dbReference type="SAM" id="MobiDB-lite"/>
    </source>
</evidence>
<evidence type="ECO:0000305" key="3"/>
<accession>Q26417</accession>
<gene>
    <name type="primary">OTX</name>
</gene>
<feature type="chain" id="PRO_0000049216" description="Homeobox protein OTX">
    <location>
        <begin position="1"/>
        <end position="371"/>
    </location>
</feature>
<feature type="DNA-binding region" description="Homeobox" evidence="1">
    <location>
        <begin position="131"/>
        <end position="190"/>
    </location>
</feature>
<feature type="region of interest" description="Disordered" evidence="2">
    <location>
        <begin position="1"/>
        <end position="63"/>
    </location>
</feature>
<feature type="region of interest" description="Disordered" evidence="2">
    <location>
        <begin position="182"/>
        <end position="269"/>
    </location>
</feature>
<feature type="compositionally biased region" description="Basic and acidic residues" evidence="2">
    <location>
        <begin position="8"/>
        <end position="34"/>
    </location>
</feature>
<feature type="compositionally biased region" description="Low complexity" evidence="2">
    <location>
        <begin position="188"/>
        <end position="206"/>
    </location>
</feature>
<feature type="compositionally biased region" description="Low complexity" evidence="2">
    <location>
        <begin position="224"/>
        <end position="249"/>
    </location>
</feature>
<name>OTX_STRPU</name>
<proteinExistence type="evidence at transcript level"/>
<reference key="1">
    <citation type="journal article" date="1995" name="Dev. Biol.">
        <title>An orthodenticle-related protein from Strongylocentrotus purpuratus.</title>
        <authorList>
            <person name="Gan L."/>
            <person name="Mao C.-A."/>
            <person name="Wikramanayake A."/>
            <person name="Angerer L.M."/>
            <person name="Angerer R.C."/>
            <person name="Klein W.H."/>
        </authorList>
    </citation>
    <scope>NUCLEOTIDE SEQUENCE [MRNA]</scope>
</reference>
<comment type="function">
    <text>May play a role in activation of the SPEC2A gene, binds to the TAATCC motif with high specificity. May have additional functions in the developing embryos.</text>
</comment>
<comment type="subunit">
    <text>Binds DNA as a monomer.</text>
</comment>
<comment type="subcellular location">
    <subcellularLocation>
        <location>Nucleus</location>
    </subcellularLocation>
</comment>
<comment type="developmental stage">
    <text>Found initially in all cells of the cleaving embryo, but gradually becomes restricted to oral ectoderm and endoderm cells.</text>
</comment>
<comment type="similarity">
    <text evidence="3">Belongs to the paired homeobox family. Bicoid subfamily.</text>
</comment>
<sequence>MEALSDLACREIKMESHSPQDSKDLNVKPVKLERLGMSSSPPRLTIDCGDTGRSPVPSHMEPPGGARVPYPMHLYPYPYAYSNPMYGEGALPAPDRHLPPTQQHPMFQPQVLGPMTSERPHSNGIDPPRKQRRERTTFTRAQLDVLETLFSRTRYPDIFMREEVAMKINLPESRVQVWFKNRRAKCRQQQQQQQNGPNSNNTTNKPRPAKKKTPPPTPRENDAPTTTSSDTPPFKASPSVSSSMPNNNSIWSPASIAPQPMSSDHLAANMSNNSCMQHSYTMPNAQPAAGYTAQGYQSPYFGAGLDYLSHMPQFPGSINHQMAASAMNNGPMTTMASQLPPPHHAHMPMGAMSSAECIDGKEQPQWKFQSL</sequence>
<dbReference type="EMBL" id="S76899">
    <property type="protein sequence ID" value="AAB33568.1"/>
    <property type="molecule type" value="mRNA"/>
</dbReference>
<dbReference type="SMR" id="Q26417"/>
<dbReference type="FunCoup" id="Q26417">
    <property type="interactions" value="256"/>
</dbReference>
<dbReference type="STRING" id="7668.Q26417"/>
<dbReference type="eggNOG" id="KOG2251">
    <property type="taxonomic scope" value="Eukaryota"/>
</dbReference>
<dbReference type="HOGENOM" id="CLU_941923_0_0_1"/>
<dbReference type="InParanoid" id="Q26417"/>
<dbReference type="PhylomeDB" id="Q26417"/>
<dbReference type="Proteomes" id="UP000007110">
    <property type="component" value="Unassembled WGS sequence"/>
</dbReference>
<dbReference type="GO" id="GO:0005634">
    <property type="term" value="C:nucleus"/>
    <property type="evidence" value="ECO:0000318"/>
    <property type="project" value="GO_Central"/>
</dbReference>
<dbReference type="GO" id="GO:0000981">
    <property type="term" value="F:DNA-binding transcription factor activity, RNA polymerase II-specific"/>
    <property type="evidence" value="ECO:0000318"/>
    <property type="project" value="GO_Central"/>
</dbReference>
<dbReference type="GO" id="GO:0000978">
    <property type="term" value="F:RNA polymerase II cis-regulatory region sequence-specific DNA binding"/>
    <property type="evidence" value="ECO:0000318"/>
    <property type="project" value="GO_Central"/>
</dbReference>
<dbReference type="GO" id="GO:0006357">
    <property type="term" value="P:regulation of transcription by RNA polymerase II"/>
    <property type="evidence" value="ECO:0000318"/>
    <property type="project" value="GO_Central"/>
</dbReference>
<dbReference type="CDD" id="cd00086">
    <property type="entry name" value="homeodomain"/>
    <property type="match status" value="1"/>
</dbReference>
<dbReference type="FunFam" id="1.10.10.60:FF:000142">
    <property type="entry name" value="homeobox protein OTX2 isoform X2"/>
    <property type="match status" value="1"/>
</dbReference>
<dbReference type="Gene3D" id="1.10.10.60">
    <property type="entry name" value="Homeodomain-like"/>
    <property type="match status" value="1"/>
</dbReference>
<dbReference type="InterPro" id="IPR001356">
    <property type="entry name" value="HD"/>
</dbReference>
<dbReference type="InterPro" id="IPR017970">
    <property type="entry name" value="Homeobox_CS"/>
</dbReference>
<dbReference type="InterPro" id="IPR009057">
    <property type="entry name" value="Homeodomain-like_sf"/>
</dbReference>
<dbReference type="PANTHER" id="PTHR45793">
    <property type="entry name" value="HOMEOBOX PROTEIN"/>
    <property type="match status" value="1"/>
</dbReference>
<dbReference type="PANTHER" id="PTHR45793:SF5">
    <property type="entry name" value="HOMEOTIC PROTEIN OCELLILESS"/>
    <property type="match status" value="1"/>
</dbReference>
<dbReference type="Pfam" id="PF00046">
    <property type="entry name" value="Homeodomain"/>
    <property type="match status" value="1"/>
</dbReference>
<dbReference type="SMART" id="SM00389">
    <property type="entry name" value="HOX"/>
    <property type="match status" value="1"/>
</dbReference>
<dbReference type="SUPFAM" id="SSF46689">
    <property type="entry name" value="Homeodomain-like"/>
    <property type="match status" value="1"/>
</dbReference>
<dbReference type="PROSITE" id="PS00027">
    <property type="entry name" value="HOMEOBOX_1"/>
    <property type="match status" value="1"/>
</dbReference>
<dbReference type="PROSITE" id="PS50071">
    <property type="entry name" value="HOMEOBOX_2"/>
    <property type="match status" value="1"/>
</dbReference>
<protein>
    <recommendedName>
        <fullName>Homeobox protein OTX</fullName>
        <shortName>SpOTX</shortName>
    </recommendedName>
    <alternativeName>
        <fullName>Orthodenticle homolog</fullName>
    </alternativeName>
</protein>
<organism>
    <name type="scientific">Strongylocentrotus purpuratus</name>
    <name type="common">Purple sea urchin</name>
    <dbReference type="NCBI Taxonomy" id="7668"/>
    <lineage>
        <taxon>Eukaryota</taxon>
        <taxon>Metazoa</taxon>
        <taxon>Echinodermata</taxon>
        <taxon>Eleutherozoa</taxon>
        <taxon>Echinozoa</taxon>
        <taxon>Echinoidea</taxon>
        <taxon>Euechinoidea</taxon>
        <taxon>Echinacea</taxon>
        <taxon>Camarodonta</taxon>
        <taxon>Echinidea</taxon>
        <taxon>Strongylocentrotidae</taxon>
        <taxon>Strongylocentrotus</taxon>
    </lineage>
</organism>